<proteinExistence type="inferred from homology"/>
<feature type="chain" id="PRO_0000314392" description="Carboxy-S-adenosyl-L-methionine synthase">
    <location>
        <begin position="1"/>
        <end position="247"/>
    </location>
</feature>
<feature type="binding site" evidence="1">
    <location>
        <position position="39"/>
    </location>
    <ligand>
        <name>S-adenosyl-L-methionine</name>
        <dbReference type="ChEBI" id="CHEBI:59789"/>
    </ligand>
</feature>
<feature type="binding site" evidence="1">
    <location>
        <begin position="89"/>
        <end position="90"/>
    </location>
    <ligand>
        <name>S-adenosyl-L-methionine</name>
        <dbReference type="ChEBI" id="CHEBI:59789"/>
    </ligand>
</feature>
<feature type="binding site" evidence="1">
    <location>
        <begin position="117"/>
        <end position="118"/>
    </location>
    <ligand>
        <name>S-adenosyl-L-methionine</name>
        <dbReference type="ChEBI" id="CHEBI:59789"/>
    </ligand>
</feature>
<feature type="binding site" evidence="1">
    <location>
        <position position="132"/>
    </location>
    <ligand>
        <name>S-adenosyl-L-methionine</name>
        <dbReference type="ChEBI" id="CHEBI:59789"/>
    </ligand>
</feature>
<feature type="binding site" evidence="1">
    <location>
        <position position="199"/>
    </location>
    <ligand>
        <name>S-adenosyl-L-methionine</name>
        <dbReference type="ChEBI" id="CHEBI:59789"/>
    </ligand>
</feature>
<evidence type="ECO:0000255" key="1">
    <source>
        <dbReference type="HAMAP-Rule" id="MF_01589"/>
    </source>
</evidence>
<reference key="1">
    <citation type="journal article" date="2006" name="Genome Res.">
        <title>Massive genome erosion and functional adaptations provide insights into the symbiotic lifestyle of Sodalis glossinidius in the tsetse host.</title>
        <authorList>
            <person name="Toh H."/>
            <person name="Weiss B.L."/>
            <person name="Perkin S.A.H."/>
            <person name="Yamashita A."/>
            <person name="Oshima K."/>
            <person name="Hattori M."/>
            <person name="Aksoy S."/>
        </authorList>
    </citation>
    <scope>NUCLEOTIDE SEQUENCE [LARGE SCALE GENOMIC DNA]</scope>
    <source>
        <strain>morsitans</strain>
    </source>
</reference>
<protein>
    <recommendedName>
        <fullName evidence="1">Carboxy-S-adenosyl-L-methionine synthase</fullName>
        <shortName evidence="1">Cx-SAM synthase</shortName>
        <ecNumber evidence="1">2.1.3.-</ecNumber>
    </recommendedName>
</protein>
<gene>
    <name evidence="1" type="primary">cmoA</name>
    <name type="ordered locus">SG1253</name>
</gene>
<organism>
    <name type="scientific">Sodalis glossinidius (strain morsitans)</name>
    <dbReference type="NCBI Taxonomy" id="343509"/>
    <lineage>
        <taxon>Bacteria</taxon>
        <taxon>Pseudomonadati</taxon>
        <taxon>Pseudomonadota</taxon>
        <taxon>Gammaproteobacteria</taxon>
        <taxon>Enterobacterales</taxon>
        <taxon>Bruguierivoracaceae</taxon>
        <taxon>Sodalis</taxon>
    </lineage>
</organism>
<comment type="function">
    <text evidence="1">Catalyzes the conversion of S-adenosyl-L-methionine (SAM) to carboxy-S-adenosyl-L-methionine (Cx-SAM).</text>
</comment>
<comment type="catalytic activity">
    <reaction evidence="1">
        <text>prephenate + S-adenosyl-L-methionine = carboxy-S-adenosyl-L-methionine + 3-phenylpyruvate + H2O</text>
        <dbReference type="Rhea" id="RHEA:51692"/>
        <dbReference type="ChEBI" id="CHEBI:15377"/>
        <dbReference type="ChEBI" id="CHEBI:18005"/>
        <dbReference type="ChEBI" id="CHEBI:29934"/>
        <dbReference type="ChEBI" id="CHEBI:59789"/>
        <dbReference type="ChEBI" id="CHEBI:134278"/>
    </reaction>
</comment>
<comment type="subunit">
    <text evidence="1">Homodimer.</text>
</comment>
<comment type="similarity">
    <text evidence="1">Belongs to the class I-like SAM-binding methyltransferase superfamily. Cx-SAM synthase family.</text>
</comment>
<name>CMOA_SODGM</name>
<keyword id="KW-0949">S-adenosyl-L-methionine</keyword>
<keyword id="KW-0808">Transferase</keyword>
<accession>Q2NTJ7</accession>
<dbReference type="EC" id="2.1.3.-" evidence="1"/>
<dbReference type="EMBL" id="AP008232">
    <property type="protein sequence ID" value="BAE74528.1"/>
    <property type="molecule type" value="Genomic_DNA"/>
</dbReference>
<dbReference type="RefSeq" id="WP_011411082.1">
    <property type="nucleotide sequence ID" value="NC_007712.1"/>
</dbReference>
<dbReference type="SMR" id="Q2NTJ7"/>
<dbReference type="STRING" id="343509.SG1253"/>
<dbReference type="KEGG" id="sgl:SG1253"/>
<dbReference type="eggNOG" id="COG4106">
    <property type="taxonomic scope" value="Bacteria"/>
</dbReference>
<dbReference type="HOGENOM" id="CLU_078475_0_0_6"/>
<dbReference type="OrthoDB" id="9779941at2"/>
<dbReference type="BioCyc" id="SGLO343509:SGP1_RS11185-MONOMER"/>
<dbReference type="Proteomes" id="UP000001932">
    <property type="component" value="Chromosome"/>
</dbReference>
<dbReference type="GO" id="GO:0016743">
    <property type="term" value="F:carboxyl- or carbamoyltransferase activity"/>
    <property type="evidence" value="ECO:0007669"/>
    <property type="project" value="UniProtKB-UniRule"/>
</dbReference>
<dbReference type="GO" id="GO:1904047">
    <property type="term" value="F:S-adenosyl-L-methionine binding"/>
    <property type="evidence" value="ECO:0007669"/>
    <property type="project" value="UniProtKB-UniRule"/>
</dbReference>
<dbReference type="GO" id="GO:0002098">
    <property type="term" value="P:tRNA wobble uridine modification"/>
    <property type="evidence" value="ECO:0007669"/>
    <property type="project" value="InterPro"/>
</dbReference>
<dbReference type="CDD" id="cd02440">
    <property type="entry name" value="AdoMet_MTases"/>
    <property type="match status" value="1"/>
</dbReference>
<dbReference type="Gene3D" id="3.40.50.150">
    <property type="entry name" value="Vaccinia Virus protein VP39"/>
    <property type="match status" value="1"/>
</dbReference>
<dbReference type="HAMAP" id="MF_01589">
    <property type="entry name" value="Cx_SAM_synthase"/>
    <property type="match status" value="1"/>
</dbReference>
<dbReference type="InterPro" id="IPR005271">
    <property type="entry name" value="CmoA"/>
</dbReference>
<dbReference type="InterPro" id="IPR041698">
    <property type="entry name" value="Methyltransf_25"/>
</dbReference>
<dbReference type="InterPro" id="IPR029063">
    <property type="entry name" value="SAM-dependent_MTases_sf"/>
</dbReference>
<dbReference type="NCBIfam" id="TIGR00740">
    <property type="entry name" value="carboxy-S-adenosyl-L-methionine synthase CmoA"/>
    <property type="match status" value="1"/>
</dbReference>
<dbReference type="NCBIfam" id="NF011995">
    <property type="entry name" value="PRK15451.1"/>
    <property type="match status" value="1"/>
</dbReference>
<dbReference type="PANTHER" id="PTHR43861:SF2">
    <property type="entry name" value="CARBOXY-S-ADENOSYL-L-METHIONINE SYNTHASE"/>
    <property type="match status" value="1"/>
</dbReference>
<dbReference type="PANTHER" id="PTHR43861">
    <property type="entry name" value="TRANS-ACONITATE 2-METHYLTRANSFERASE-RELATED"/>
    <property type="match status" value="1"/>
</dbReference>
<dbReference type="Pfam" id="PF13649">
    <property type="entry name" value="Methyltransf_25"/>
    <property type="match status" value="1"/>
</dbReference>
<dbReference type="PIRSF" id="PIRSF006325">
    <property type="entry name" value="MeTrfase_bac"/>
    <property type="match status" value="1"/>
</dbReference>
<dbReference type="SUPFAM" id="SSF53335">
    <property type="entry name" value="S-adenosyl-L-methionine-dependent methyltransferases"/>
    <property type="match status" value="1"/>
</dbReference>
<sequence length="247" mass="27543">MTHRDDLFSAPIASLGDWTFDERVAEVFPDMIQRSVPGYSNIISMIGMLAGRFARPGTQIYDLGCALGAATLAMRRTISHGDCRIIAVDNSPAMIDRCRRHISAFHATTPTEIIEDDISTVPIENASLVVLNFTMQFLEPAQRQTLLNRIYAGLNTGGALVLSEKFSFQDQLIGGLLFDMHHDFKRANGYSELEISQKRSMLENVMLTDTVEVHKQRLVEAGFGHAELWFQCFNFGSLISIKPESGQ</sequence>